<name>ARGB_VIBC3</name>
<keyword id="KW-0028">Amino-acid biosynthesis</keyword>
<keyword id="KW-0055">Arginine biosynthesis</keyword>
<keyword id="KW-0067">ATP-binding</keyword>
<keyword id="KW-0963">Cytoplasm</keyword>
<keyword id="KW-0418">Kinase</keyword>
<keyword id="KW-0547">Nucleotide-binding</keyword>
<keyword id="KW-0808">Transferase</keyword>
<gene>
    <name evidence="1" type="primary">argB</name>
    <name type="ordered locus">VC0395_A2219</name>
    <name type="ordered locus">VC395_2756</name>
</gene>
<feature type="chain" id="PRO_1000071221" description="Acetylglutamate kinase">
    <location>
        <begin position="1"/>
        <end position="262"/>
    </location>
</feature>
<feature type="binding site" evidence="1">
    <location>
        <begin position="48"/>
        <end position="49"/>
    </location>
    <ligand>
        <name>substrate</name>
    </ligand>
</feature>
<feature type="binding site" evidence="1">
    <location>
        <position position="70"/>
    </location>
    <ligand>
        <name>substrate</name>
    </ligand>
</feature>
<feature type="binding site" evidence="1">
    <location>
        <position position="162"/>
    </location>
    <ligand>
        <name>substrate</name>
    </ligand>
</feature>
<feature type="site" description="Transition state stabilizer" evidence="1">
    <location>
        <position position="12"/>
    </location>
</feature>
<feature type="site" description="Transition state stabilizer" evidence="1">
    <location>
        <position position="221"/>
    </location>
</feature>
<dbReference type="EC" id="2.7.2.8" evidence="1"/>
<dbReference type="EMBL" id="CP000627">
    <property type="protein sequence ID" value="ABQ22004.1"/>
    <property type="molecule type" value="Genomic_DNA"/>
</dbReference>
<dbReference type="EMBL" id="CP001235">
    <property type="protein sequence ID" value="ACP10741.1"/>
    <property type="molecule type" value="Genomic_DNA"/>
</dbReference>
<dbReference type="RefSeq" id="WP_001281558.1">
    <property type="nucleotide sequence ID" value="NZ_JAACZH010000007.1"/>
</dbReference>
<dbReference type="SMR" id="A5F4Z5"/>
<dbReference type="KEGG" id="vco:VC0395_A2219"/>
<dbReference type="KEGG" id="vcr:VC395_2756"/>
<dbReference type="PATRIC" id="fig|345073.21.peg.2655"/>
<dbReference type="eggNOG" id="COG0548">
    <property type="taxonomic scope" value="Bacteria"/>
</dbReference>
<dbReference type="HOGENOM" id="CLU_053680_1_1_6"/>
<dbReference type="OrthoDB" id="5915023at2"/>
<dbReference type="UniPathway" id="UPA00068">
    <property type="reaction ID" value="UER00107"/>
</dbReference>
<dbReference type="Proteomes" id="UP000000249">
    <property type="component" value="Chromosome 2"/>
</dbReference>
<dbReference type="GO" id="GO:0005737">
    <property type="term" value="C:cytoplasm"/>
    <property type="evidence" value="ECO:0007669"/>
    <property type="project" value="UniProtKB-SubCell"/>
</dbReference>
<dbReference type="GO" id="GO:0003991">
    <property type="term" value="F:acetylglutamate kinase activity"/>
    <property type="evidence" value="ECO:0007669"/>
    <property type="project" value="UniProtKB-UniRule"/>
</dbReference>
<dbReference type="GO" id="GO:0005524">
    <property type="term" value="F:ATP binding"/>
    <property type="evidence" value="ECO:0007669"/>
    <property type="project" value="UniProtKB-UniRule"/>
</dbReference>
<dbReference type="GO" id="GO:0042450">
    <property type="term" value="P:arginine biosynthetic process via ornithine"/>
    <property type="evidence" value="ECO:0007669"/>
    <property type="project" value="UniProtKB-UniRule"/>
</dbReference>
<dbReference type="GO" id="GO:0006526">
    <property type="term" value="P:L-arginine biosynthetic process"/>
    <property type="evidence" value="ECO:0007669"/>
    <property type="project" value="UniProtKB-UniPathway"/>
</dbReference>
<dbReference type="CDD" id="cd04249">
    <property type="entry name" value="AAK_NAGK-NC"/>
    <property type="match status" value="1"/>
</dbReference>
<dbReference type="FunFam" id="3.40.1160.10:FF:000008">
    <property type="entry name" value="Acetylglutamate kinase"/>
    <property type="match status" value="1"/>
</dbReference>
<dbReference type="Gene3D" id="3.40.1160.10">
    <property type="entry name" value="Acetylglutamate kinase-like"/>
    <property type="match status" value="1"/>
</dbReference>
<dbReference type="HAMAP" id="MF_00082">
    <property type="entry name" value="ArgB"/>
    <property type="match status" value="1"/>
</dbReference>
<dbReference type="InterPro" id="IPR036393">
    <property type="entry name" value="AceGlu_kinase-like_sf"/>
</dbReference>
<dbReference type="InterPro" id="IPR004662">
    <property type="entry name" value="AcgluKinase_fam"/>
</dbReference>
<dbReference type="InterPro" id="IPR037528">
    <property type="entry name" value="ArgB"/>
</dbReference>
<dbReference type="InterPro" id="IPR001048">
    <property type="entry name" value="Asp/Glu/Uridylate_kinase"/>
</dbReference>
<dbReference type="InterPro" id="IPR041731">
    <property type="entry name" value="NAGK-NC"/>
</dbReference>
<dbReference type="NCBIfam" id="TIGR00761">
    <property type="entry name" value="argB"/>
    <property type="match status" value="1"/>
</dbReference>
<dbReference type="PANTHER" id="PTHR23342">
    <property type="entry name" value="N-ACETYLGLUTAMATE SYNTHASE"/>
    <property type="match status" value="1"/>
</dbReference>
<dbReference type="PANTHER" id="PTHR23342:SF0">
    <property type="entry name" value="N-ACETYLGLUTAMATE SYNTHASE, MITOCHONDRIAL"/>
    <property type="match status" value="1"/>
</dbReference>
<dbReference type="Pfam" id="PF00696">
    <property type="entry name" value="AA_kinase"/>
    <property type="match status" value="1"/>
</dbReference>
<dbReference type="PIRSF" id="PIRSF000728">
    <property type="entry name" value="NAGK"/>
    <property type="match status" value="1"/>
</dbReference>
<dbReference type="SUPFAM" id="SSF53633">
    <property type="entry name" value="Carbamate kinase-like"/>
    <property type="match status" value="1"/>
</dbReference>
<reference key="1">
    <citation type="submission" date="2007-03" db="EMBL/GenBank/DDBJ databases">
        <authorList>
            <person name="Heidelberg J."/>
        </authorList>
    </citation>
    <scope>NUCLEOTIDE SEQUENCE [LARGE SCALE GENOMIC DNA]</scope>
    <source>
        <strain>ATCC 39541 / Classical Ogawa 395 / O395</strain>
    </source>
</reference>
<reference key="2">
    <citation type="journal article" date="2008" name="PLoS ONE">
        <title>A recalibrated molecular clock and independent origins for the cholera pandemic clones.</title>
        <authorList>
            <person name="Feng L."/>
            <person name="Reeves P.R."/>
            <person name="Lan R."/>
            <person name="Ren Y."/>
            <person name="Gao C."/>
            <person name="Zhou Z."/>
            <person name="Ren Y."/>
            <person name="Cheng J."/>
            <person name="Wang W."/>
            <person name="Wang J."/>
            <person name="Qian W."/>
            <person name="Li D."/>
            <person name="Wang L."/>
        </authorList>
    </citation>
    <scope>NUCLEOTIDE SEQUENCE [LARGE SCALE GENOMIC DNA]</scope>
    <source>
        <strain>ATCC 39541 / Classical Ogawa 395 / O395</strain>
    </source>
</reference>
<accession>A5F4Z5</accession>
<accession>C3LXP1</accession>
<sequence length="262" mass="27012">MSDLKLSPLVIKLGGAALDCAETLSKLFGAIAQYQNQAQRRIVIVHGGGYLVDDLMAKLQLKSVKKDGLRVTPYDQIPIIAGALAGTANKMLQGQAIKDGINAVGLSLADGGLCHVEELDPELGAVGKATPGDSTLLQAILATGAMPIISSIGLTAQGQMMNVNADQAAVAVAGALDAELVLLSDVSGVLDGKGHLIATLDAKQADALIAGKVITDGMIVKVKAALEAAQDLGRPIEVATWRYPEKLAKLFGGESIGTRFLP</sequence>
<proteinExistence type="inferred from homology"/>
<organism>
    <name type="scientific">Vibrio cholerae serotype O1 (strain ATCC 39541 / Classical Ogawa 395 / O395)</name>
    <dbReference type="NCBI Taxonomy" id="345073"/>
    <lineage>
        <taxon>Bacteria</taxon>
        <taxon>Pseudomonadati</taxon>
        <taxon>Pseudomonadota</taxon>
        <taxon>Gammaproteobacteria</taxon>
        <taxon>Vibrionales</taxon>
        <taxon>Vibrionaceae</taxon>
        <taxon>Vibrio</taxon>
    </lineage>
</organism>
<evidence type="ECO:0000255" key="1">
    <source>
        <dbReference type="HAMAP-Rule" id="MF_00082"/>
    </source>
</evidence>
<comment type="function">
    <text evidence="1">Catalyzes the ATP-dependent phosphorylation of N-acetyl-L-glutamate.</text>
</comment>
<comment type="catalytic activity">
    <reaction evidence="1">
        <text>N-acetyl-L-glutamate + ATP = N-acetyl-L-glutamyl 5-phosphate + ADP</text>
        <dbReference type="Rhea" id="RHEA:14629"/>
        <dbReference type="ChEBI" id="CHEBI:30616"/>
        <dbReference type="ChEBI" id="CHEBI:44337"/>
        <dbReference type="ChEBI" id="CHEBI:57936"/>
        <dbReference type="ChEBI" id="CHEBI:456216"/>
        <dbReference type="EC" id="2.7.2.8"/>
    </reaction>
</comment>
<comment type="pathway">
    <text evidence="1">Amino-acid biosynthesis; L-arginine biosynthesis; N(2)-acetyl-L-ornithine from L-glutamate: step 2/4.</text>
</comment>
<comment type="subcellular location">
    <subcellularLocation>
        <location evidence="1">Cytoplasm</location>
    </subcellularLocation>
</comment>
<comment type="similarity">
    <text evidence="1">Belongs to the acetylglutamate kinase family. ArgB subfamily.</text>
</comment>
<protein>
    <recommendedName>
        <fullName evidence="1">Acetylglutamate kinase</fullName>
        <ecNumber evidence="1">2.7.2.8</ecNumber>
    </recommendedName>
    <alternativeName>
        <fullName evidence="1">N-acetyl-L-glutamate 5-phosphotransferase</fullName>
    </alternativeName>
    <alternativeName>
        <fullName evidence="1">NAG kinase</fullName>
        <shortName evidence="1">NAGK</shortName>
    </alternativeName>
</protein>